<gene>
    <name evidence="1" type="primary">lgt</name>
    <name type="ordered locus">BCQ_4983</name>
</gene>
<sequence>MLLGSVPQLDRVAIQLGPFPVYWYGIIIGTGVLLGLWLATREGERLGIPKDTFVDLVLIAVPIAILFARMYYVIFEWEYYAQNPSQIINIRQGGLAIHGGLIGAVITGILFAKRRGVSFWKLADIAAPSILLGQAIGRWGNFMNQEAHGDEVTRQFLEGLHLPDFIINQMYIDGVYYHPTFLYESLWNFAGVILLLALRKVNLRRGELFFTYLIWYSVGRFFVEGLRTDSLMLGPLRIAQVMSIGLVVISIIFIIVRRKMGQADKRYLEN</sequence>
<dbReference type="EC" id="2.5.1.145" evidence="1"/>
<dbReference type="EMBL" id="CP000227">
    <property type="protein sequence ID" value="ACM15383.1"/>
    <property type="molecule type" value="Genomic_DNA"/>
</dbReference>
<dbReference type="SMR" id="B9J4R6"/>
<dbReference type="KEGG" id="bcq:BCQ_4983"/>
<dbReference type="HOGENOM" id="CLU_013386_0_1_9"/>
<dbReference type="UniPathway" id="UPA00664"/>
<dbReference type="Proteomes" id="UP000000441">
    <property type="component" value="Chromosome"/>
</dbReference>
<dbReference type="GO" id="GO:0005886">
    <property type="term" value="C:plasma membrane"/>
    <property type="evidence" value="ECO:0007669"/>
    <property type="project" value="UniProtKB-SubCell"/>
</dbReference>
<dbReference type="GO" id="GO:0008961">
    <property type="term" value="F:phosphatidylglycerol-prolipoprotein diacylglyceryl transferase activity"/>
    <property type="evidence" value="ECO:0007669"/>
    <property type="project" value="UniProtKB-UniRule"/>
</dbReference>
<dbReference type="GO" id="GO:0042158">
    <property type="term" value="P:lipoprotein biosynthetic process"/>
    <property type="evidence" value="ECO:0007669"/>
    <property type="project" value="UniProtKB-UniRule"/>
</dbReference>
<dbReference type="HAMAP" id="MF_01147">
    <property type="entry name" value="Lgt"/>
    <property type="match status" value="1"/>
</dbReference>
<dbReference type="InterPro" id="IPR001640">
    <property type="entry name" value="Lgt"/>
</dbReference>
<dbReference type="NCBIfam" id="TIGR00544">
    <property type="entry name" value="lgt"/>
    <property type="match status" value="1"/>
</dbReference>
<dbReference type="PANTHER" id="PTHR30589:SF0">
    <property type="entry name" value="PHOSPHATIDYLGLYCEROL--PROLIPOPROTEIN DIACYLGLYCERYL TRANSFERASE"/>
    <property type="match status" value="1"/>
</dbReference>
<dbReference type="PANTHER" id="PTHR30589">
    <property type="entry name" value="PROLIPOPROTEIN DIACYLGLYCERYL TRANSFERASE"/>
    <property type="match status" value="1"/>
</dbReference>
<dbReference type="Pfam" id="PF01790">
    <property type="entry name" value="LGT"/>
    <property type="match status" value="1"/>
</dbReference>
<dbReference type="PROSITE" id="PS01311">
    <property type="entry name" value="LGT"/>
    <property type="match status" value="1"/>
</dbReference>
<organism>
    <name type="scientific">Bacillus cereus (strain Q1)</name>
    <dbReference type="NCBI Taxonomy" id="361100"/>
    <lineage>
        <taxon>Bacteria</taxon>
        <taxon>Bacillati</taxon>
        <taxon>Bacillota</taxon>
        <taxon>Bacilli</taxon>
        <taxon>Bacillales</taxon>
        <taxon>Bacillaceae</taxon>
        <taxon>Bacillus</taxon>
        <taxon>Bacillus cereus group</taxon>
    </lineage>
</organism>
<reference key="1">
    <citation type="journal article" date="2009" name="J. Bacteriol.">
        <title>Complete genome sequence of the extremophilic Bacillus cereus strain Q1 with industrial applications.</title>
        <authorList>
            <person name="Xiong Z."/>
            <person name="Jiang Y."/>
            <person name="Qi D."/>
            <person name="Lu H."/>
            <person name="Yang F."/>
            <person name="Yang J."/>
            <person name="Chen L."/>
            <person name="Sun L."/>
            <person name="Xu X."/>
            <person name="Xue Y."/>
            <person name="Zhu Y."/>
            <person name="Jin Q."/>
        </authorList>
    </citation>
    <scope>NUCLEOTIDE SEQUENCE [LARGE SCALE GENOMIC DNA]</scope>
    <source>
        <strain>Q1</strain>
    </source>
</reference>
<name>LGT_BACCQ</name>
<evidence type="ECO:0000255" key="1">
    <source>
        <dbReference type="HAMAP-Rule" id="MF_01147"/>
    </source>
</evidence>
<keyword id="KW-1003">Cell membrane</keyword>
<keyword id="KW-0472">Membrane</keyword>
<keyword id="KW-0808">Transferase</keyword>
<keyword id="KW-0812">Transmembrane</keyword>
<keyword id="KW-1133">Transmembrane helix</keyword>
<accession>B9J4R6</accession>
<proteinExistence type="inferred from homology"/>
<protein>
    <recommendedName>
        <fullName evidence="1">Phosphatidylglycerol--prolipoprotein diacylglyceryl transferase</fullName>
        <ecNumber evidence="1">2.5.1.145</ecNumber>
    </recommendedName>
</protein>
<comment type="function">
    <text evidence="1">Catalyzes the transfer of the diacylglyceryl group from phosphatidylglycerol to the sulfhydryl group of the N-terminal cysteine of a prolipoprotein, the first step in the formation of mature lipoproteins.</text>
</comment>
<comment type="catalytic activity">
    <reaction evidence="1">
        <text>L-cysteinyl-[prolipoprotein] + a 1,2-diacyl-sn-glycero-3-phospho-(1'-sn-glycerol) = an S-1,2-diacyl-sn-glyceryl-L-cysteinyl-[prolipoprotein] + sn-glycerol 1-phosphate + H(+)</text>
        <dbReference type="Rhea" id="RHEA:56712"/>
        <dbReference type="Rhea" id="RHEA-COMP:14679"/>
        <dbReference type="Rhea" id="RHEA-COMP:14680"/>
        <dbReference type="ChEBI" id="CHEBI:15378"/>
        <dbReference type="ChEBI" id="CHEBI:29950"/>
        <dbReference type="ChEBI" id="CHEBI:57685"/>
        <dbReference type="ChEBI" id="CHEBI:64716"/>
        <dbReference type="ChEBI" id="CHEBI:140658"/>
        <dbReference type="EC" id="2.5.1.145"/>
    </reaction>
</comment>
<comment type="pathway">
    <text evidence="1">Protein modification; lipoprotein biosynthesis (diacylglyceryl transfer).</text>
</comment>
<comment type="subcellular location">
    <subcellularLocation>
        <location evidence="1">Cell membrane</location>
        <topology evidence="1">Multi-pass membrane protein</topology>
    </subcellularLocation>
</comment>
<comment type="similarity">
    <text evidence="1">Belongs to the Lgt family.</text>
</comment>
<feature type="chain" id="PRO_1000164125" description="Phosphatidylglycerol--prolipoprotein diacylglyceryl transferase">
    <location>
        <begin position="1"/>
        <end position="270"/>
    </location>
</feature>
<feature type="transmembrane region" description="Helical" evidence="1">
    <location>
        <begin position="19"/>
        <end position="39"/>
    </location>
</feature>
<feature type="transmembrane region" description="Helical" evidence="1">
    <location>
        <begin position="56"/>
        <end position="76"/>
    </location>
</feature>
<feature type="transmembrane region" description="Helical" evidence="1">
    <location>
        <begin position="92"/>
        <end position="112"/>
    </location>
</feature>
<feature type="transmembrane region" description="Helical" evidence="1">
    <location>
        <begin position="116"/>
        <end position="136"/>
    </location>
</feature>
<feature type="transmembrane region" description="Helical" evidence="1">
    <location>
        <begin position="178"/>
        <end position="198"/>
    </location>
</feature>
<feature type="transmembrane region" description="Helical" evidence="1">
    <location>
        <begin position="206"/>
        <end position="226"/>
    </location>
</feature>
<feature type="transmembrane region" description="Helical" evidence="1">
    <location>
        <begin position="236"/>
        <end position="256"/>
    </location>
</feature>
<feature type="binding site" evidence="1">
    <location>
        <position position="138"/>
    </location>
    <ligand>
        <name>a 1,2-diacyl-sn-glycero-3-phospho-(1'-sn-glycerol)</name>
        <dbReference type="ChEBI" id="CHEBI:64716"/>
    </ligand>
</feature>